<proteinExistence type="inferred from homology"/>
<accession>B1YPX4</accession>
<comment type="cofactor">
    <cofactor evidence="1">
        <name>Zn(2+)</name>
        <dbReference type="ChEBI" id="CHEBI:29105"/>
    </cofactor>
    <text evidence="1">Binds 1 zinc ion per subunit.</text>
</comment>
<comment type="subcellular location">
    <subcellularLocation>
        <location evidence="1">Cell inner membrane</location>
        <topology evidence="1">Multi-pass membrane protein</topology>
    </subcellularLocation>
</comment>
<comment type="similarity">
    <text evidence="1">Belongs to the peptidase M48B family.</text>
</comment>
<keyword id="KW-0997">Cell inner membrane</keyword>
<keyword id="KW-1003">Cell membrane</keyword>
<keyword id="KW-0378">Hydrolase</keyword>
<keyword id="KW-0472">Membrane</keyword>
<keyword id="KW-0479">Metal-binding</keyword>
<keyword id="KW-0482">Metalloprotease</keyword>
<keyword id="KW-0645">Protease</keyword>
<keyword id="KW-0812">Transmembrane</keyword>
<keyword id="KW-1133">Transmembrane helix</keyword>
<keyword id="KW-0862">Zinc</keyword>
<sequence>MFNWVKTAMLMAGITALFIVIGGMIGGTRGMTIALLFALAMNFFSYWFSDKMVLRMYNAQEVDENTAPQFYRMVRELATRANLPMPRVYLINEDAPNAFATGRNPEHAAVAATTGILRVLSEREMRGVMAHELAHVKHRDILISTITATMAGAISALANFAMFFGGRDENGRPANPIAGIAVALLAPIAGALIQMAISRAREFEADRGGAQISGDPQSLATALDKIHRYAAGIPFQAAEAHPATAQMMIMNPLHGGGLQNLFSTHPATEERIARLMEMARTGRFD</sequence>
<evidence type="ECO:0000255" key="1">
    <source>
        <dbReference type="HAMAP-Rule" id="MF_00188"/>
    </source>
</evidence>
<dbReference type="EC" id="3.4.24.-" evidence="1"/>
<dbReference type="EMBL" id="CP001025">
    <property type="protein sequence ID" value="ACB65538.1"/>
    <property type="molecule type" value="Genomic_DNA"/>
</dbReference>
<dbReference type="RefSeq" id="WP_006750073.1">
    <property type="nucleotide sequence ID" value="NC_010551.1"/>
</dbReference>
<dbReference type="GeneID" id="93084628"/>
<dbReference type="KEGG" id="bac:BamMC406_3062"/>
<dbReference type="HOGENOM" id="CLU_042266_3_0_4"/>
<dbReference type="OrthoDB" id="15218at2"/>
<dbReference type="Proteomes" id="UP000001680">
    <property type="component" value="Chromosome 1"/>
</dbReference>
<dbReference type="GO" id="GO:0005886">
    <property type="term" value="C:plasma membrane"/>
    <property type="evidence" value="ECO:0007669"/>
    <property type="project" value="UniProtKB-SubCell"/>
</dbReference>
<dbReference type="GO" id="GO:0004222">
    <property type="term" value="F:metalloendopeptidase activity"/>
    <property type="evidence" value="ECO:0007669"/>
    <property type="project" value="UniProtKB-UniRule"/>
</dbReference>
<dbReference type="GO" id="GO:0008270">
    <property type="term" value="F:zinc ion binding"/>
    <property type="evidence" value="ECO:0007669"/>
    <property type="project" value="UniProtKB-UniRule"/>
</dbReference>
<dbReference type="GO" id="GO:0006508">
    <property type="term" value="P:proteolysis"/>
    <property type="evidence" value="ECO:0007669"/>
    <property type="project" value="UniProtKB-KW"/>
</dbReference>
<dbReference type="CDD" id="cd07336">
    <property type="entry name" value="M48B_HtpX_like"/>
    <property type="match status" value="1"/>
</dbReference>
<dbReference type="Gene3D" id="3.30.2010.10">
    <property type="entry name" value="Metalloproteases ('zincins'), catalytic domain"/>
    <property type="match status" value="1"/>
</dbReference>
<dbReference type="HAMAP" id="MF_00188">
    <property type="entry name" value="Pept_M48_protease_HtpX"/>
    <property type="match status" value="1"/>
</dbReference>
<dbReference type="InterPro" id="IPR050083">
    <property type="entry name" value="HtpX_protease"/>
</dbReference>
<dbReference type="InterPro" id="IPR022919">
    <property type="entry name" value="Pept_M48_protease_HtpX"/>
</dbReference>
<dbReference type="InterPro" id="IPR001915">
    <property type="entry name" value="Peptidase_M48"/>
</dbReference>
<dbReference type="NCBIfam" id="NF002363">
    <property type="entry name" value="PRK01345.1"/>
    <property type="match status" value="1"/>
</dbReference>
<dbReference type="NCBIfam" id="NF002826">
    <property type="entry name" value="PRK03001.1"/>
    <property type="match status" value="1"/>
</dbReference>
<dbReference type="PANTHER" id="PTHR43221">
    <property type="entry name" value="PROTEASE HTPX"/>
    <property type="match status" value="1"/>
</dbReference>
<dbReference type="PANTHER" id="PTHR43221:SF1">
    <property type="entry name" value="PROTEASE HTPX"/>
    <property type="match status" value="1"/>
</dbReference>
<dbReference type="Pfam" id="PF01435">
    <property type="entry name" value="Peptidase_M48"/>
    <property type="match status" value="1"/>
</dbReference>
<reference key="1">
    <citation type="submission" date="2008-04" db="EMBL/GenBank/DDBJ databases">
        <title>Complete sequence of chromosome 1 of Burkholderia ambifaria MC40-6.</title>
        <authorList>
            <person name="Copeland A."/>
            <person name="Lucas S."/>
            <person name="Lapidus A."/>
            <person name="Glavina del Rio T."/>
            <person name="Dalin E."/>
            <person name="Tice H."/>
            <person name="Pitluck S."/>
            <person name="Chain P."/>
            <person name="Malfatti S."/>
            <person name="Shin M."/>
            <person name="Vergez L."/>
            <person name="Lang D."/>
            <person name="Schmutz J."/>
            <person name="Larimer F."/>
            <person name="Land M."/>
            <person name="Hauser L."/>
            <person name="Kyrpides N."/>
            <person name="Lykidis A."/>
            <person name="Ramette A."/>
            <person name="Konstantinidis K."/>
            <person name="Tiedje J."/>
            <person name="Richardson P."/>
        </authorList>
    </citation>
    <scope>NUCLEOTIDE SEQUENCE [LARGE SCALE GENOMIC DNA]</scope>
    <source>
        <strain>MC40-6</strain>
    </source>
</reference>
<feature type="chain" id="PRO_1000098807" description="Protease HtpX homolog">
    <location>
        <begin position="1"/>
        <end position="285"/>
    </location>
</feature>
<feature type="transmembrane region" description="Helical" evidence="1">
    <location>
        <begin position="7"/>
        <end position="27"/>
    </location>
</feature>
<feature type="transmembrane region" description="Helical" evidence="1">
    <location>
        <begin position="30"/>
        <end position="50"/>
    </location>
</feature>
<feature type="transmembrane region" description="Helical" evidence="1">
    <location>
        <begin position="146"/>
        <end position="166"/>
    </location>
</feature>
<feature type="transmembrane region" description="Helical" evidence="1">
    <location>
        <begin position="177"/>
        <end position="197"/>
    </location>
</feature>
<feature type="active site" evidence="1">
    <location>
        <position position="132"/>
    </location>
</feature>
<feature type="binding site" evidence="1">
    <location>
        <position position="131"/>
    </location>
    <ligand>
        <name>Zn(2+)</name>
        <dbReference type="ChEBI" id="CHEBI:29105"/>
        <note>catalytic</note>
    </ligand>
</feature>
<feature type="binding site" evidence="1">
    <location>
        <position position="135"/>
    </location>
    <ligand>
        <name>Zn(2+)</name>
        <dbReference type="ChEBI" id="CHEBI:29105"/>
        <note>catalytic</note>
    </ligand>
</feature>
<feature type="binding site" evidence="1">
    <location>
        <position position="202"/>
    </location>
    <ligand>
        <name>Zn(2+)</name>
        <dbReference type="ChEBI" id="CHEBI:29105"/>
        <note>catalytic</note>
    </ligand>
</feature>
<gene>
    <name evidence="1" type="primary">htpX</name>
    <name type="ordered locus">BamMC406_3062</name>
</gene>
<organism>
    <name type="scientific">Burkholderia ambifaria (strain MC40-6)</name>
    <dbReference type="NCBI Taxonomy" id="398577"/>
    <lineage>
        <taxon>Bacteria</taxon>
        <taxon>Pseudomonadati</taxon>
        <taxon>Pseudomonadota</taxon>
        <taxon>Betaproteobacteria</taxon>
        <taxon>Burkholderiales</taxon>
        <taxon>Burkholderiaceae</taxon>
        <taxon>Burkholderia</taxon>
        <taxon>Burkholderia cepacia complex</taxon>
    </lineage>
</organism>
<protein>
    <recommendedName>
        <fullName evidence="1">Protease HtpX homolog</fullName>
        <ecNumber evidence="1">3.4.24.-</ecNumber>
    </recommendedName>
</protein>
<name>HTPX_BURA4</name>